<proteinExistence type="evidence at protein level"/>
<name>TPS1_MELLI</name>
<comment type="function">
    <text evidence="2">Terpene synthase that shows monoterpene synthase activity and produces linalool, using geranyl diphosphate (GPP) as substrate (PubMed:32913319). Also shows sesquiterpene synthase activity as it is able to convert farnesyl diphosphate (FPP) into (E)-nerolidol (PubMed:32913319).</text>
</comment>
<comment type="catalytic activity">
    <reaction evidence="2">
        <text>(2E)-geranyl diphosphate + H2O = linalool + diphosphate</text>
        <dbReference type="Rhea" id="RHEA:68708"/>
        <dbReference type="ChEBI" id="CHEBI:15377"/>
        <dbReference type="ChEBI" id="CHEBI:17580"/>
        <dbReference type="ChEBI" id="CHEBI:33019"/>
        <dbReference type="ChEBI" id="CHEBI:58057"/>
    </reaction>
    <physiologicalReaction direction="left-to-right" evidence="2">
        <dbReference type="Rhea" id="RHEA:68709"/>
    </physiologicalReaction>
</comment>
<comment type="catalytic activity">
    <reaction evidence="2">
        <text>(2E,6E)-farnesyl diphosphate + H2O = (6E)-nerolidol + diphosphate</text>
        <dbReference type="Rhea" id="RHEA:56984"/>
        <dbReference type="ChEBI" id="CHEBI:15377"/>
        <dbReference type="ChEBI" id="CHEBI:33019"/>
        <dbReference type="ChEBI" id="CHEBI:141283"/>
        <dbReference type="ChEBI" id="CHEBI:175763"/>
    </reaction>
    <physiologicalReaction direction="left-to-right" evidence="2">
        <dbReference type="Rhea" id="RHEA:56985"/>
    </physiologicalReaction>
</comment>
<comment type="cofactor">
    <cofactor evidence="1">
        <name>Mg(2+)</name>
        <dbReference type="ChEBI" id="CHEBI:18420"/>
    </cofactor>
    <text evidence="1">Binds 2 Mg(2+) ions per subunit.</text>
</comment>
<comment type="miscellaneous">
    <text evidence="2">IDS-like terpene synthases originate from a geranylgeranyl diphosphate synthase (GGDPS) progenitor in fungi, after the split of Melampsora from other genera within the class of pucciniomycetes. They lack coupling activity and act as classical terpene synthases.</text>
</comment>
<comment type="similarity">
    <text evidence="4">Belongs to the FPP/GGPP synthase family.</text>
</comment>
<dbReference type="EC" id="4.2.3.-" evidence="2"/>
<dbReference type="EMBL" id="MK946441">
    <property type="protein sequence ID" value="QIG55793.1"/>
    <property type="molecule type" value="mRNA"/>
</dbReference>
<dbReference type="SMR" id="A0A858E7J4"/>
<dbReference type="GO" id="GO:0016829">
    <property type="term" value="F:lyase activity"/>
    <property type="evidence" value="ECO:0007669"/>
    <property type="project" value="UniProtKB-KW"/>
</dbReference>
<dbReference type="GO" id="GO:0046872">
    <property type="term" value="F:metal ion binding"/>
    <property type="evidence" value="ECO:0007669"/>
    <property type="project" value="UniProtKB-KW"/>
</dbReference>
<dbReference type="GO" id="GO:0004659">
    <property type="term" value="F:prenyltransferase activity"/>
    <property type="evidence" value="ECO:0007669"/>
    <property type="project" value="InterPro"/>
</dbReference>
<dbReference type="GO" id="GO:0008299">
    <property type="term" value="P:isoprenoid biosynthetic process"/>
    <property type="evidence" value="ECO:0007669"/>
    <property type="project" value="InterPro"/>
</dbReference>
<dbReference type="CDD" id="cd00867">
    <property type="entry name" value="Trans_IPPS"/>
    <property type="match status" value="1"/>
</dbReference>
<dbReference type="Gene3D" id="1.10.600.10">
    <property type="entry name" value="Farnesyl Diphosphate Synthase"/>
    <property type="match status" value="1"/>
</dbReference>
<dbReference type="InterPro" id="IPR008949">
    <property type="entry name" value="Isoprenoid_synthase_dom_sf"/>
</dbReference>
<dbReference type="InterPro" id="IPR000092">
    <property type="entry name" value="Polyprenyl_synt"/>
</dbReference>
<dbReference type="PANTHER" id="PTHR12001">
    <property type="entry name" value="GERANYLGERANYL PYROPHOSPHATE SYNTHASE"/>
    <property type="match status" value="1"/>
</dbReference>
<dbReference type="PANTHER" id="PTHR12001:SF44">
    <property type="entry name" value="GERANYLGERANYL PYROPHOSPHATE SYNTHASE"/>
    <property type="match status" value="1"/>
</dbReference>
<dbReference type="Pfam" id="PF00348">
    <property type="entry name" value="polyprenyl_synt"/>
    <property type="match status" value="1"/>
</dbReference>
<dbReference type="SFLD" id="SFLDS00005">
    <property type="entry name" value="Isoprenoid_Synthase_Type_I"/>
    <property type="match status" value="1"/>
</dbReference>
<dbReference type="SUPFAM" id="SSF48576">
    <property type="entry name" value="Terpenoid synthases"/>
    <property type="match status" value="1"/>
</dbReference>
<sequence>MTLSIYDDIFKQFPTIDEWSEPNEKIILEPFTYLGIITAKELPSMLIKAFNYWYQVPPPVLDLILKVVGPFHAATLLIDDIQDDSELRGGIPVAHKVYGVAQTINSANYVYFEAYQNISKLTPYLKSPETTDLWSMFNDEILALHRGQGLELYWRDTFTCPTEEEYLRMVHNKTGGMFRVAIKLMKALSPVQSLPDYFPLVNIIGILVQIRDDLLNLSPAFTKHKGYCEDLSEGKFGFPLIHSIKADSSNTLLMDILKLRPKDVPTKRKALKYMNDQTKSLDYTFDVICKLEKTAKDELKKLGGNPELSSIFELIHLSSTPDIEEKYKS</sequence>
<accession>A0A858E7J4</accession>
<feature type="chain" id="PRO_0000457153" description="IDS-like terpene synthase 1">
    <location>
        <begin position="1"/>
        <end position="329"/>
    </location>
</feature>
<feature type="binding site" evidence="1">
    <location>
        <position position="79"/>
    </location>
    <ligand>
        <name>Mg(2+)</name>
        <dbReference type="ChEBI" id="CHEBI:18420"/>
        <label>1</label>
    </ligand>
</feature>
<feature type="binding site" evidence="1">
    <location>
        <position position="79"/>
    </location>
    <ligand>
        <name>Mg(2+)</name>
        <dbReference type="ChEBI" id="CHEBI:18420"/>
        <label>2</label>
    </ligand>
</feature>
<feature type="binding site" evidence="1">
    <location>
        <position position="83"/>
    </location>
    <ligand>
        <name>Mg(2+)</name>
        <dbReference type="ChEBI" id="CHEBI:18420"/>
        <label>1</label>
    </ligand>
</feature>
<feature type="binding site" evidence="1">
    <location>
        <position position="83"/>
    </location>
    <ligand>
        <name>Mg(2+)</name>
        <dbReference type="ChEBI" id="CHEBI:18420"/>
        <label>2</label>
    </ligand>
</feature>
<reference key="1">
    <citation type="journal article" date="2020" name="Sci. Rep.">
        <title>Evolution of isoprenyl diphosphate synthase-like terpene synthases in fungi.</title>
        <authorList>
            <person name="Wei G."/>
            <person name="Eberl F."/>
            <person name="Chen X."/>
            <person name="Zhang C."/>
            <person name="Unsicker S.B."/>
            <person name="Koellner T.G."/>
            <person name="Gershenzon J."/>
            <person name="Chen F."/>
        </authorList>
    </citation>
    <scope>NUCLEOTIDE SEQUENCE [MRNA]</scope>
    <scope>FUNCTION</scope>
    <scope>CATALYTIC ACTIVITY</scope>
</reference>
<protein>
    <recommendedName>
        <fullName evidence="3">IDS-like terpene synthase 1</fullName>
        <shortName evidence="3">ILTPS1</shortName>
        <ecNumber evidence="2">4.2.3.-</ecNumber>
    </recommendedName>
</protein>
<organism>
    <name type="scientific">Melampsora lini</name>
    <name type="common">Rust fungus</name>
    <dbReference type="NCBI Taxonomy" id="5261"/>
    <lineage>
        <taxon>Eukaryota</taxon>
        <taxon>Fungi</taxon>
        <taxon>Dikarya</taxon>
        <taxon>Basidiomycota</taxon>
        <taxon>Pucciniomycotina</taxon>
        <taxon>Pucciniomycetes</taxon>
        <taxon>Pucciniales</taxon>
        <taxon>Melampsoraceae</taxon>
        <taxon>Melampsora</taxon>
    </lineage>
</organism>
<gene>
    <name evidence="3" type="primary">ILTPS1</name>
</gene>
<evidence type="ECO:0000250" key="1">
    <source>
        <dbReference type="UniProtKB" id="Q12051"/>
    </source>
</evidence>
<evidence type="ECO:0000269" key="2">
    <source>
    </source>
</evidence>
<evidence type="ECO:0000303" key="3">
    <source>
    </source>
</evidence>
<evidence type="ECO:0000305" key="4"/>
<keyword id="KW-0456">Lyase</keyword>
<keyword id="KW-0460">Magnesium</keyword>
<keyword id="KW-0479">Metal-binding</keyword>